<gene>
    <name evidence="1" type="primary">rplB</name>
    <name type="ordered locus">GOX0377</name>
</gene>
<dbReference type="EMBL" id="CP000009">
    <property type="protein sequence ID" value="AAW60160.1"/>
    <property type="molecule type" value="Genomic_DNA"/>
</dbReference>
<dbReference type="RefSeq" id="WP_011251963.1">
    <property type="nucleotide sequence ID" value="NZ_LT900338.1"/>
</dbReference>
<dbReference type="SMR" id="Q5FTY6"/>
<dbReference type="STRING" id="290633.GOX0377"/>
<dbReference type="GeneID" id="56904643"/>
<dbReference type="KEGG" id="gox:GOX0377"/>
<dbReference type="eggNOG" id="COG0090">
    <property type="taxonomic scope" value="Bacteria"/>
</dbReference>
<dbReference type="HOGENOM" id="CLU_036235_2_1_5"/>
<dbReference type="Proteomes" id="UP000006375">
    <property type="component" value="Chromosome"/>
</dbReference>
<dbReference type="GO" id="GO:0015934">
    <property type="term" value="C:large ribosomal subunit"/>
    <property type="evidence" value="ECO:0007669"/>
    <property type="project" value="InterPro"/>
</dbReference>
<dbReference type="GO" id="GO:0019843">
    <property type="term" value="F:rRNA binding"/>
    <property type="evidence" value="ECO:0007669"/>
    <property type="project" value="UniProtKB-UniRule"/>
</dbReference>
<dbReference type="GO" id="GO:0003735">
    <property type="term" value="F:structural constituent of ribosome"/>
    <property type="evidence" value="ECO:0007669"/>
    <property type="project" value="InterPro"/>
</dbReference>
<dbReference type="GO" id="GO:0016740">
    <property type="term" value="F:transferase activity"/>
    <property type="evidence" value="ECO:0007669"/>
    <property type="project" value="InterPro"/>
</dbReference>
<dbReference type="GO" id="GO:0002181">
    <property type="term" value="P:cytoplasmic translation"/>
    <property type="evidence" value="ECO:0007669"/>
    <property type="project" value="TreeGrafter"/>
</dbReference>
<dbReference type="FunFam" id="2.30.30.30:FF:000001">
    <property type="entry name" value="50S ribosomal protein L2"/>
    <property type="match status" value="1"/>
</dbReference>
<dbReference type="FunFam" id="2.40.50.140:FF:000003">
    <property type="entry name" value="50S ribosomal protein L2"/>
    <property type="match status" value="1"/>
</dbReference>
<dbReference type="FunFam" id="4.10.950.10:FF:000001">
    <property type="entry name" value="50S ribosomal protein L2"/>
    <property type="match status" value="1"/>
</dbReference>
<dbReference type="Gene3D" id="2.30.30.30">
    <property type="match status" value="1"/>
</dbReference>
<dbReference type="Gene3D" id="2.40.50.140">
    <property type="entry name" value="Nucleic acid-binding proteins"/>
    <property type="match status" value="1"/>
</dbReference>
<dbReference type="Gene3D" id="4.10.950.10">
    <property type="entry name" value="Ribosomal protein L2, domain 3"/>
    <property type="match status" value="1"/>
</dbReference>
<dbReference type="HAMAP" id="MF_01320_B">
    <property type="entry name" value="Ribosomal_uL2_B"/>
    <property type="match status" value="1"/>
</dbReference>
<dbReference type="InterPro" id="IPR012340">
    <property type="entry name" value="NA-bd_OB-fold"/>
</dbReference>
<dbReference type="InterPro" id="IPR014722">
    <property type="entry name" value="Rib_uL2_dom2"/>
</dbReference>
<dbReference type="InterPro" id="IPR002171">
    <property type="entry name" value="Ribosomal_uL2"/>
</dbReference>
<dbReference type="InterPro" id="IPR005880">
    <property type="entry name" value="Ribosomal_uL2_bac/org-type"/>
</dbReference>
<dbReference type="InterPro" id="IPR022669">
    <property type="entry name" value="Ribosomal_uL2_C"/>
</dbReference>
<dbReference type="InterPro" id="IPR022671">
    <property type="entry name" value="Ribosomal_uL2_CS"/>
</dbReference>
<dbReference type="InterPro" id="IPR014726">
    <property type="entry name" value="Ribosomal_uL2_dom3"/>
</dbReference>
<dbReference type="InterPro" id="IPR022666">
    <property type="entry name" value="Ribosomal_uL2_RNA-bd_dom"/>
</dbReference>
<dbReference type="InterPro" id="IPR008991">
    <property type="entry name" value="Translation_prot_SH3-like_sf"/>
</dbReference>
<dbReference type="NCBIfam" id="TIGR01171">
    <property type="entry name" value="rplB_bact"/>
    <property type="match status" value="1"/>
</dbReference>
<dbReference type="PANTHER" id="PTHR13691:SF5">
    <property type="entry name" value="LARGE RIBOSOMAL SUBUNIT PROTEIN UL2M"/>
    <property type="match status" value="1"/>
</dbReference>
<dbReference type="PANTHER" id="PTHR13691">
    <property type="entry name" value="RIBOSOMAL PROTEIN L2"/>
    <property type="match status" value="1"/>
</dbReference>
<dbReference type="Pfam" id="PF00181">
    <property type="entry name" value="Ribosomal_L2"/>
    <property type="match status" value="1"/>
</dbReference>
<dbReference type="Pfam" id="PF03947">
    <property type="entry name" value="Ribosomal_L2_C"/>
    <property type="match status" value="1"/>
</dbReference>
<dbReference type="PIRSF" id="PIRSF002158">
    <property type="entry name" value="Ribosomal_L2"/>
    <property type="match status" value="1"/>
</dbReference>
<dbReference type="SMART" id="SM01383">
    <property type="entry name" value="Ribosomal_L2"/>
    <property type="match status" value="1"/>
</dbReference>
<dbReference type="SMART" id="SM01382">
    <property type="entry name" value="Ribosomal_L2_C"/>
    <property type="match status" value="1"/>
</dbReference>
<dbReference type="SUPFAM" id="SSF50249">
    <property type="entry name" value="Nucleic acid-binding proteins"/>
    <property type="match status" value="1"/>
</dbReference>
<dbReference type="SUPFAM" id="SSF50104">
    <property type="entry name" value="Translation proteins SH3-like domain"/>
    <property type="match status" value="1"/>
</dbReference>
<dbReference type="PROSITE" id="PS00467">
    <property type="entry name" value="RIBOSOMAL_L2"/>
    <property type="match status" value="1"/>
</dbReference>
<sequence>MALKHFNPTTPSTRGTVLIDRSELFKGKPVKQLTEGKNKSGGRNNHGRTTVRFRGGGHKQSYRYVDFKRRKFDVAATVERLEYDPNRTAFIALIKYEDGELAYILAPQRVKVGDRVISGAHTDVKPGNAMPLGAMPVGTIVHNIELKQGAGGKLARSAGTYAQLVGKDAGYAQVKLQSGELRLVRGECMATVGAVSNPDNMNQHMGKAGRSRWLGRRPHNRGVVMNPVDHPHGGGEGRTSGGRHPVTPWGVPTKGYKTRVNKKTDSLIIRRRKSGK</sequence>
<evidence type="ECO:0000255" key="1">
    <source>
        <dbReference type="HAMAP-Rule" id="MF_01320"/>
    </source>
</evidence>
<evidence type="ECO:0000256" key="2">
    <source>
        <dbReference type="SAM" id="MobiDB-lite"/>
    </source>
</evidence>
<evidence type="ECO:0000305" key="3"/>
<feature type="chain" id="PRO_0000237191" description="Large ribosomal subunit protein uL2">
    <location>
        <begin position="1"/>
        <end position="276"/>
    </location>
</feature>
<feature type="region of interest" description="Disordered" evidence="2">
    <location>
        <begin position="224"/>
        <end position="254"/>
    </location>
</feature>
<accession>Q5FTY6</accession>
<proteinExistence type="inferred from homology"/>
<reference key="1">
    <citation type="journal article" date="2005" name="Nat. Biotechnol.">
        <title>Complete genome sequence of the acetic acid bacterium Gluconobacter oxydans.</title>
        <authorList>
            <person name="Prust C."/>
            <person name="Hoffmeister M."/>
            <person name="Liesegang H."/>
            <person name="Wiezer A."/>
            <person name="Fricke W.F."/>
            <person name="Ehrenreich A."/>
            <person name="Gottschalk G."/>
            <person name="Deppenmeier U."/>
        </authorList>
    </citation>
    <scope>NUCLEOTIDE SEQUENCE [LARGE SCALE GENOMIC DNA]</scope>
    <source>
        <strain>621H</strain>
    </source>
</reference>
<protein>
    <recommendedName>
        <fullName evidence="1">Large ribosomal subunit protein uL2</fullName>
    </recommendedName>
    <alternativeName>
        <fullName evidence="3">50S ribosomal protein L2</fullName>
    </alternativeName>
</protein>
<comment type="function">
    <text evidence="1">One of the primary rRNA binding proteins. Required for association of the 30S and 50S subunits to form the 70S ribosome, for tRNA binding and peptide bond formation. It has been suggested to have peptidyltransferase activity; this is somewhat controversial. Makes several contacts with the 16S rRNA in the 70S ribosome.</text>
</comment>
<comment type="subunit">
    <text evidence="1">Part of the 50S ribosomal subunit. Forms a bridge to the 30S subunit in the 70S ribosome.</text>
</comment>
<comment type="similarity">
    <text evidence="1">Belongs to the universal ribosomal protein uL2 family.</text>
</comment>
<organism>
    <name type="scientific">Gluconobacter oxydans (strain 621H)</name>
    <name type="common">Gluconobacter suboxydans</name>
    <dbReference type="NCBI Taxonomy" id="290633"/>
    <lineage>
        <taxon>Bacteria</taxon>
        <taxon>Pseudomonadati</taxon>
        <taxon>Pseudomonadota</taxon>
        <taxon>Alphaproteobacteria</taxon>
        <taxon>Acetobacterales</taxon>
        <taxon>Acetobacteraceae</taxon>
        <taxon>Gluconobacter</taxon>
    </lineage>
</organism>
<name>RL2_GLUOX</name>
<keyword id="KW-1185">Reference proteome</keyword>
<keyword id="KW-0687">Ribonucleoprotein</keyword>
<keyword id="KW-0689">Ribosomal protein</keyword>
<keyword id="KW-0694">RNA-binding</keyword>
<keyword id="KW-0699">rRNA-binding</keyword>